<comment type="function">
    <text evidence="1">This is the catalytic component of the active enzyme, which catalyzes the hydrolysis of ATP coupled with the exchange of sodium and potassium ions across the plasma membrane. This action creates the electrochemical gradient of sodium and potassium, providing the energy for active transport of various nutrients (By similarity).</text>
</comment>
<comment type="catalytic activity">
    <reaction>
        <text>K(+)(out) + Na(+)(in) + ATP + H2O = K(+)(in) + Na(+)(out) + ADP + phosphate + H(+)</text>
        <dbReference type="Rhea" id="RHEA:18353"/>
        <dbReference type="ChEBI" id="CHEBI:15377"/>
        <dbReference type="ChEBI" id="CHEBI:15378"/>
        <dbReference type="ChEBI" id="CHEBI:29101"/>
        <dbReference type="ChEBI" id="CHEBI:29103"/>
        <dbReference type="ChEBI" id="CHEBI:30616"/>
        <dbReference type="ChEBI" id="CHEBI:43474"/>
        <dbReference type="ChEBI" id="CHEBI:456216"/>
        <dbReference type="EC" id="7.2.2.13"/>
    </reaction>
</comment>
<comment type="subunit">
    <text evidence="8">The sodium/potassium-transporting ATPase is composed of a catalytic alpha subunit, an auxiliary non-catalytic beta subunit and an additional regulatory subunit. Interacts with regulatory subunit FXYD1.</text>
</comment>
<comment type="subcellular location">
    <subcellularLocation>
        <location evidence="1">Membrane</location>
        <topology evidence="1">Multi-pass membrane protein</topology>
    </subcellularLocation>
    <subcellularLocation>
        <location evidence="1">Cell membrane</location>
        <topology evidence="1">Multi-pass membrane protein</topology>
    </subcellularLocation>
</comment>
<comment type="similarity">
    <text evidence="9">Belongs to the cation transport ATPase (P-type) (TC 3.A.3) family. Type IIC subfamily.</text>
</comment>
<sequence>MGRGAGREYSPAATTAENGGGKKKQKEKELDELKKEVAMDDHKLSLDELGRKYQVDLSKGLTNQRAQDILARDGPNALTPPPTTPEWVKFCRQLFGGFSILLWIGAILCFLAFGIQAAMEDEPSNDNLYLGVVLAAVVIVTGCFSYYQEAKSSKIMDSFKNMVPQQALVVREGEKMQINAEEVVVGDLVEVKGGDRVPADLRIISSHGCKVDNSSLTGESEPQTRSPEFTHENPLETRNICFFSTNCVEGTARGIVIATGDRTVMGRIATLASGLEVGRTPIAMEIEHFIQLITGVAVFLGVSFFVLSLILGYSWLEAVIFLIGIIVANVPEGLLATVTVCLTLTAKRMARKNCLVKNLEAVETLGSTSTICSDKTGTLTQNRMTVAHMWFDNQIHEADTTEDQSGATFDKRSPTWTALSRIAGLCNRAVFKAGQENISVSKRDTAGDASESALLKCIELSCGSVRKMRDRNPKVAEIPFNSTNKYQLSIHEREDSPQSHVLVMKGAPERILDRCSSILVQGKEIPLDKEMQDAFQNAYLELGGLGERVLGFCQLNLPSAKFPRGFKFDTDELNFPTEKLCFVGLMSMIDPPRAAVPDAVGKCRSAGIKVIMVTGDHPITAKAIAKGVGIISEGNETVEDIAARLNIPVSQVNPREAKACVVHGSDLKDMTSEQLDEILKNHTEIVFARTSPQQKLIIVEGCQRQGAIVAVTGDGVNDSPALKKADIGIAMGIAGSDVSKQAADMILLDDNFASIVTGVEEGRLIFDNLKKSIAYTLTSNIPEITPFLLFIIANIPLPLGTVTILCIDLGTDMVPAISLAYEAAESDIMKRQPRNPQTDKLVNERLISMAYGQIGMIQALGGFFTYFVILAENGFLPSRLLGIRLDWDDRSMNDLEDSYGQEWTYEQRKVVEFTCHTAFFASIVVVQWADLIICKTRRNSVFQQGMKNKILIFGLLEETALAAFLSYCPGMGVALRMYPLKVTWWFCAFPYSLLIFIYDEVRKLILRRYPGGWVEKETYY</sequence>
<reference key="1">
    <citation type="submission" date="2007-02" db="EMBL/GenBank/DDBJ databases">
        <authorList>
            <consortium name="NIH - Mammalian Gene Collection (MGC) project"/>
        </authorList>
    </citation>
    <scope>NUCLEOTIDE SEQUENCE [LARGE SCALE MRNA]</scope>
    <source>
        <strain>Hereford</strain>
        <tissue>Brain cortex</tissue>
    </source>
</reference>
<reference key="2">
    <citation type="journal article" date="2003" name="J. Neurosci.">
        <title>Phospholemman, a single-span membrane protein, is an accessory protein of Na,K-ATPase in cerebellum and choroid plexus.</title>
        <authorList>
            <person name="Feschenko M.S."/>
            <person name="Donnet C."/>
            <person name="Wetzel R.K."/>
            <person name="Asinovski N.K."/>
            <person name="Jones L.R."/>
            <person name="Sweadner K.J."/>
        </authorList>
    </citation>
    <scope>INTERACTION WITH FXYD1</scope>
</reference>
<dbReference type="EC" id="7.2.2.13"/>
<dbReference type="EMBL" id="BC133297">
    <property type="protein sequence ID" value="AAI33298.1"/>
    <property type="molecule type" value="mRNA"/>
</dbReference>
<dbReference type="RefSeq" id="NP_001074993.1">
    <property type="nucleotide sequence ID" value="NM_001081524.1"/>
</dbReference>
<dbReference type="SMR" id="A2VDL6"/>
<dbReference type="FunCoup" id="A2VDL6">
    <property type="interactions" value="462"/>
</dbReference>
<dbReference type="STRING" id="9913.ENSBTAP00000046095"/>
<dbReference type="PaxDb" id="9913-ENSBTAP00000046095"/>
<dbReference type="PeptideAtlas" id="A2VDL6"/>
<dbReference type="Ensembl" id="ENSBTAT00000049161.3">
    <property type="protein sequence ID" value="ENSBTAP00000046095.2"/>
    <property type="gene ID" value="ENSBTAG00000010551.6"/>
</dbReference>
<dbReference type="GeneID" id="515161"/>
<dbReference type="KEGG" id="bta:515161"/>
<dbReference type="CTD" id="477"/>
<dbReference type="VEuPathDB" id="HostDB:ENSBTAG00000010551"/>
<dbReference type="VGNC" id="VGNC:53849">
    <property type="gene designation" value="ATP1A2"/>
</dbReference>
<dbReference type="eggNOG" id="KOG0203">
    <property type="taxonomic scope" value="Eukaryota"/>
</dbReference>
<dbReference type="GeneTree" id="ENSGT00940000159936"/>
<dbReference type="HOGENOM" id="CLU_002360_4_3_1"/>
<dbReference type="InParanoid" id="A2VDL6"/>
<dbReference type="OMA" id="ISWEWAL"/>
<dbReference type="OrthoDB" id="3352408at2759"/>
<dbReference type="TreeFam" id="TF312838"/>
<dbReference type="Reactome" id="R-BTA-5578775">
    <property type="pathway name" value="Ion homeostasis"/>
</dbReference>
<dbReference type="Reactome" id="R-BTA-936837">
    <property type="pathway name" value="Ion transport by P-type ATPases"/>
</dbReference>
<dbReference type="Proteomes" id="UP000009136">
    <property type="component" value="Chromosome 3"/>
</dbReference>
<dbReference type="Bgee" id="ENSBTAG00000010551">
    <property type="expression patterns" value="Expressed in prefrontal cortex and 93 other cell types or tissues"/>
</dbReference>
<dbReference type="GO" id="GO:0042995">
    <property type="term" value="C:cell projection"/>
    <property type="evidence" value="ECO:0000318"/>
    <property type="project" value="GO_Central"/>
</dbReference>
<dbReference type="GO" id="GO:0009986">
    <property type="term" value="C:cell surface"/>
    <property type="evidence" value="ECO:0007669"/>
    <property type="project" value="Ensembl"/>
</dbReference>
<dbReference type="GO" id="GO:0005783">
    <property type="term" value="C:endoplasmic reticulum"/>
    <property type="evidence" value="ECO:0007669"/>
    <property type="project" value="Ensembl"/>
</dbReference>
<dbReference type="GO" id="GO:0043025">
    <property type="term" value="C:neuronal cell body"/>
    <property type="evidence" value="ECO:0007669"/>
    <property type="project" value="Ensembl"/>
</dbReference>
<dbReference type="GO" id="GO:0031090">
    <property type="term" value="C:organelle membrane"/>
    <property type="evidence" value="ECO:0007669"/>
    <property type="project" value="Ensembl"/>
</dbReference>
<dbReference type="GO" id="GO:0005886">
    <property type="term" value="C:plasma membrane"/>
    <property type="evidence" value="ECO:0000318"/>
    <property type="project" value="GO_Central"/>
</dbReference>
<dbReference type="GO" id="GO:0005890">
    <property type="term" value="C:sodium:potassium-exchanging ATPase complex"/>
    <property type="evidence" value="ECO:0000318"/>
    <property type="project" value="GO_Central"/>
</dbReference>
<dbReference type="GO" id="GO:0030315">
    <property type="term" value="C:T-tubule"/>
    <property type="evidence" value="ECO:0007669"/>
    <property type="project" value="Ensembl"/>
</dbReference>
<dbReference type="GO" id="GO:0005524">
    <property type="term" value="F:ATP binding"/>
    <property type="evidence" value="ECO:0007669"/>
    <property type="project" value="UniProtKB-KW"/>
</dbReference>
<dbReference type="GO" id="GO:0016887">
    <property type="term" value="F:ATP hydrolysis activity"/>
    <property type="evidence" value="ECO:0007669"/>
    <property type="project" value="Ensembl"/>
</dbReference>
<dbReference type="GO" id="GO:0005391">
    <property type="term" value="F:P-type sodium:potassium-exchanging transporter activity"/>
    <property type="evidence" value="ECO:0000318"/>
    <property type="project" value="GO_Central"/>
</dbReference>
<dbReference type="GO" id="GO:0030955">
    <property type="term" value="F:potassium ion binding"/>
    <property type="evidence" value="ECO:0007669"/>
    <property type="project" value="Ensembl"/>
</dbReference>
<dbReference type="GO" id="GO:0051087">
    <property type="term" value="F:protein-folding chaperone binding"/>
    <property type="evidence" value="ECO:0007669"/>
    <property type="project" value="Ensembl"/>
</dbReference>
<dbReference type="GO" id="GO:0031402">
    <property type="term" value="F:sodium ion binding"/>
    <property type="evidence" value="ECO:0007669"/>
    <property type="project" value="Ensembl"/>
</dbReference>
<dbReference type="GO" id="GO:1990239">
    <property type="term" value="F:steroid hormone binding"/>
    <property type="evidence" value="ECO:0007669"/>
    <property type="project" value="Ensembl"/>
</dbReference>
<dbReference type="GO" id="GO:0008344">
    <property type="term" value="P:adult locomotory behavior"/>
    <property type="evidence" value="ECO:0007669"/>
    <property type="project" value="Ensembl"/>
</dbReference>
<dbReference type="GO" id="GO:0021764">
    <property type="term" value="P:amygdala development"/>
    <property type="evidence" value="ECO:0007669"/>
    <property type="project" value="Ensembl"/>
</dbReference>
<dbReference type="GO" id="GO:0046034">
    <property type="term" value="P:ATP metabolic process"/>
    <property type="evidence" value="ECO:0007669"/>
    <property type="project" value="Ensembl"/>
</dbReference>
<dbReference type="GO" id="GO:0001662">
    <property type="term" value="P:behavioral fear response"/>
    <property type="evidence" value="ECO:0007669"/>
    <property type="project" value="Ensembl"/>
</dbReference>
<dbReference type="GO" id="GO:0071383">
    <property type="term" value="P:cellular response to steroid hormone stimulus"/>
    <property type="evidence" value="ECO:0007669"/>
    <property type="project" value="Ensembl"/>
</dbReference>
<dbReference type="GO" id="GO:0030007">
    <property type="term" value="P:intracellular potassium ion homeostasis"/>
    <property type="evidence" value="ECO:0000318"/>
    <property type="project" value="GO_Central"/>
</dbReference>
<dbReference type="GO" id="GO:0006883">
    <property type="term" value="P:intracellular sodium ion homeostasis"/>
    <property type="evidence" value="ECO:0000318"/>
    <property type="project" value="GO_Central"/>
</dbReference>
<dbReference type="GO" id="GO:0019852">
    <property type="term" value="P:L-ascorbic acid metabolic process"/>
    <property type="evidence" value="ECO:0007669"/>
    <property type="project" value="Ensembl"/>
</dbReference>
<dbReference type="GO" id="GO:0040011">
    <property type="term" value="P:locomotion"/>
    <property type="evidence" value="ECO:0007669"/>
    <property type="project" value="Ensembl"/>
</dbReference>
<dbReference type="GO" id="GO:0035641">
    <property type="term" value="P:locomotory exploration behavior"/>
    <property type="evidence" value="ECO:0007669"/>
    <property type="project" value="Ensembl"/>
</dbReference>
<dbReference type="GO" id="GO:0051899">
    <property type="term" value="P:membrane depolarization"/>
    <property type="evidence" value="ECO:0007669"/>
    <property type="project" value="Ensembl"/>
</dbReference>
<dbReference type="GO" id="GO:0051481">
    <property type="term" value="P:negative regulation of cytosolic calcium ion concentration"/>
    <property type="evidence" value="ECO:0007669"/>
    <property type="project" value="Ensembl"/>
</dbReference>
<dbReference type="GO" id="GO:0045822">
    <property type="term" value="P:negative regulation of heart contraction"/>
    <property type="evidence" value="ECO:0007669"/>
    <property type="project" value="Ensembl"/>
</dbReference>
<dbReference type="GO" id="GO:0045988">
    <property type="term" value="P:negative regulation of striated muscle contraction"/>
    <property type="evidence" value="ECO:0007669"/>
    <property type="project" value="Ensembl"/>
</dbReference>
<dbReference type="GO" id="GO:0019227">
    <property type="term" value="P:neuronal action potential propagation"/>
    <property type="evidence" value="ECO:0007669"/>
    <property type="project" value="Ensembl"/>
</dbReference>
<dbReference type="GO" id="GO:0001504">
    <property type="term" value="P:neurotransmitter uptake"/>
    <property type="evidence" value="ECO:0007669"/>
    <property type="project" value="Ensembl"/>
</dbReference>
<dbReference type="GO" id="GO:0021989">
    <property type="term" value="P:olfactory cortex development"/>
    <property type="evidence" value="ECO:0007669"/>
    <property type="project" value="Ensembl"/>
</dbReference>
<dbReference type="GO" id="GO:1990573">
    <property type="term" value="P:potassium ion import across plasma membrane"/>
    <property type="evidence" value="ECO:0000318"/>
    <property type="project" value="GO_Central"/>
</dbReference>
<dbReference type="GO" id="GO:1902600">
    <property type="term" value="P:proton transmembrane transport"/>
    <property type="evidence" value="ECO:0000318"/>
    <property type="project" value="GO_Central"/>
</dbReference>
<dbReference type="GO" id="GO:0008217">
    <property type="term" value="P:regulation of blood pressure"/>
    <property type="evidence" value="ECO:0007669"/>
    <property type="project" value="Ensembl"/>
</dbReference>
<dbReference type="GO" id="GO:0002087">
    <property type="term" value="P:regulation of respiratory gaseous exchange by nervous system process"/>
    <property type="evidence" value="ECO:0007669"/>
    <property type="project" value="Ensembl"/>
</dbReference>
<dbReference type="GO" id="GO:0006940">
    <property type="term" value="P:regulation of smooth muscle contraction"/>
    <property type="evidence" value="ECO:0007669"/>
    <property type="project" value="Ensembl"/>
</dbReference>
<dbReference type="GO" id="GO:0002026">
    <property type="term" value="P:regulation of the force of heart contraction"/>
    <property type="evidence" value="ECO:0007669"/>
    <property type="project" value="Ensembl"/>
</dbReference>
<dbReference type="GO" id="GO:0019229">
    <property type="term" value="P:regulation of vasoconstriction"/>
    <property type="evidence" value="ECO:0007669"/>
    <property type="project" value="Ensembl"/>
</dbReference>
<dbReference type="GO" id="GO:0010996">
    <property type="term" value="P:response to auditory stimulus"/>
    <property type="evidence" value="ECO:0007669"/>
    <property type="project" value="Ensembl"/>
</dbReference>
<dbReference type="GO" id="GO:1903416">
    <property type="term" value="P:response to glycoside"/>
    <property type="evidence" value="ECO:0007669"/>
    <property type="project" value="Ensembl"/>
</dbReference>
<dbReference type="GO" id="GO:0035864">
    <property type="term" value="P:response to potassium ion"/>
    <property type="evidence" value="ECO:0007669"/>
    <property type="project" value="Ensembl"/>
</dbReference>
<dbReference type="GO" id="GO:0036376">
    <property type="term" value="P:sodium ion export across plasma membrane"/>
    <property type="evidence" value="ECO:0000318"/>
    <property type="project" value="GO_Central"/>
</dbReference>
<dbReference type="GO" id="GO:0008542">
    <property type="term" value="P:visual learning"/>
    <property type="evidence" value="ECO:0007669"/>
    <property type="project" value="Ensembl"/>
</dbReference>
<dbReference type="CDD" id="cd02608">
    <property type="entry name" value="P-type_ATPase_Na-K_like"/>
    <property type="match status" value="1"/>
</dbReference>
<dbReference type="FunFam" id="2.70.150.10:FF:000142">
    <property type="entry name" value="Na/K ATPase alpha 2 subunit"/>
    <property type="match status" value="1"/>
</dbReference>
<dbReference type="FunFam" id="2.70.150.10:FF:000106">
    <property type="entry name" value="Sodium/potassium-transporting ATPase subunit alpha"/>
    <property type="match status" value="1"/>
</dbReference>
<dbReference type="FunFam" id="3.40.1110.10:FF:000001">
    <property type="entry name" value="Sodium/potassium-transporting ATPase subunit alpha"/>
    <property type="match status" value="1"/>
</dbReference>
<dbReference type="FunFam" id="3.40.50.1000:FF:000004">
    <property type="entry name" value="Sodium/potassium-transporting ATPase subunit alpha"/>
    <property type="match status" value="1"/>
</dbReference>
<dbReference type="FunFam" id="1.20.1110.10:FF:000095">
    <property type="entry name" value="Sodium/potassium-transporting ATPase subunit alpha-1"/>
    <property type="match status" value="2"/>
</dbReference>
<dbReference type="Gene3D" id="3.40.1110.10">
    <property type="entry name" value="Calcium-transporting ATPase, cytoplasmic domain N"/>
    <property type="match status" value="1"/>
</dbReference>
<dbReference type="Gene3D" id="2.70.150.10">
    <property type="entry name" value="Calcium-transporting ATPase, cytoplasmic transduction domain A"/>
    <property type="match status" value="1"/>
</dbReference>
<dbReference type="Gene3D" id="1.20.1110.10">
    <property type="entry name" value="Calcium-transporting ATPase, transmembrane domain"/>
    <property type="match status" value="1"/>
</dbReference>
<dbReference type="Gene3D" id="3.40.50.1000">
    <property type="entry name" value="HAD superfamily/HAD-like"/>
    <property type="match status" value="1"/>
</dbReference>
<dbReference type="InterPro" id="IPR006068">
    <property type="entry name" value="ATPase_P-typ_cation-transptr_C"/>
</dbReference>
<dbReference type="InterPro" id="IPR004014">
    <property type="entry name" value="ATPase_P-typ_cation-transptr_N"/>
</dbReference>
<dbReference type="InterPro" id="IPR023299">
    <property type="entry name" value="ATPase_P-typ_cyto_dom_N"/>
</dbReference>
<dbReference type="InterPro" id="IPR018303">
    <property type="entry name" value="ATPase_P-typ_P_site"/>
</dbReference>
<dbReference type="InterPro" id="IPR023298">
    <property type="entry name" value="ATPase_P-typ_TM_dom_sf"/>
</dbReference>
<dbReference type="InterPro" id="IPR008250">
    <property type="entry name" value="ATPase_P-typ_transduc_dom_A_sf"/>
</dbReference>
<dbReference type="InterPro" id="IPR050510">
    <property type="entry name" value="Cation_transp_ATPase_P-type"/>
</dbReference>
<dbReference type="InterPro" id="IPR036412">
    <property type="entry name" value="HAD-like_sf"/>
</dbReference>
<dbReference type="InterPro" id="IPR023214">
    <property type="entry name" value="HAD_sf"/>
</dbReference>
<dbReference type="InterPro" id="IPR005775">
    <property type="entry name" value="P-type_ATPase_IIC"/>
</dbReference>
<dbReference type="InterPro" id="IPR001757">
    <property type="entry name" value="P_typ_ATPase"/>
</dbReference>
<dbReference type="InterPro" id="IPR044492">
    <property type="entry name" value="P_typ_ATPase_HD_dom"/>
</dbReference>
<dbReference type="NCBIfam" id="TIGR01106">
    <property type="entry name" value="ATPase-IIC_X-K"/>
    <property type="match status" value="1"/>
</dbReference>
<dbReference type="NCBIfam" id="TIGR01494">
    <property type="entry name" value="ATPase_P-type"/>
    <property type="match status" value="2"/>
</dbReference>
<dbReference type="PANTHER" id="PTHR43294">
    <property type="entry name" value="SODIUM/POTASSIUM-TRANSPORTING ATPASE SUBUNIT ALPHA"/>
    <property type="match status" value="1"/>
</dbReference>
<dbReference type="PANTHER" id="PTHR43294:SF6">
    <property type="entry name" value="SODIUM_POTASSIUM-TRANSPORTING ATPASE SUBUNIT ALPHA-2"/>
    <property type="match status" value="1"/>
</dbReference>
<dbReference type="Pfam" id="PF13246">
    <property type="entry name" value="Cation_ATPase"/>
    <property type="match status" value="1"/>
</dbReference>
<dbReference type="Pfam" id="PF00689">
    <property type="entry name" value="Cation_ATPase_C"/>
    <property type="match status" value="1"/>
</dbReference>
<dbReference type="Pfam" id="PF00690">
    <property type="entry name" value="Cation_ATPase_N"/>
    <property type="match status" value="1"/>
</dbReference>
<dbReference type="Pfam" id="PF00122">
    <property type="entry name" value="E1-E2_ATPase"/>
    <property type="match status" value="1"/>
</dbReference>
<dbReference type="Pfam" id="PF00702">
    <property type="entry name" value="Hydrolase"/>
    <property type="match status" value="1"/>
</dbReference>
<dbReference type="PRINTS" id="PR00119">
    <property type="entry name" value="CATATPASE"/>
</dbReference>
<dbReference type="PRINTS" id="PR00121">
    <property type="entry name" value="NAKATPASE"/>
</dbReference>
<dbReference type="SFLD" id="SFLDS00003">
    <property type="entry name" value="Haloacid_Dehalogenase"/>
    <property type="match status" value="1"/>
</dbReference>
<dbReference type="SFLD" id="SFLDF00027">
    <property type="entry name" value="p-type_atpase"/>
    <property type="match status" value="1"/>
</dbReference>
<dbReference type="SMART" id="SM00831">
    <property type="entry name" value="Cation_ATPase_N"/>
    <property type="match status" value="1"/>
</dbReference>
<dbReference type="SUPFAM" id="SSF81653">
    <property type="entry name" value="Calcium ATPase, transduction domain A"/>
    <property type="match status" value="1"/>
</dbReference>
<dbReference type="SUPFAM" id="SSF81665">
    <property type="entry name" value="Calcium ATPase, transmembrane domain M"/>
    <property type="match status" value="1"/>
</dbReference>
<dbReference type="SUPFAM" id="SSF56784">
    <property type="entry name" value="HAD-like"/>
    <property type="match status" value="1"/>
</dbReference>
<dbReference type="SUPFAM" id="SSF81660">
    <property type="entry name" value="Metal cation-transporting ATPase, ATP-binding domain N"/>
    <property type="match status" value="1"/>
</dbReference>
<dbReference type="PROSITE" id="PS00154">
    <property type="entry name" value="ATPASE_E1_E2"/>
    <property type="match status" value="1"/>
</dbReference>
<protein>
    <recommendedName>
        <fullName>Sodium/potassium-transporting ATPase subunit alpha-2</fullName>
        <shortName>Na(+)/K(+) ATPase alpha-2 subunit</shortName>
        <ecNumber>7.2.2.13</ecNumber>
    </recommendedName>
    <alternativeName>
        <fullName>Sodium pump subunit alpha-2</fullName>
    </alternativeName>
</protein>
<gene>
    <name type="primary">ATP1A2</name>
</gene>
<proteinExistence type="evidence at protein level"/>
<evidence type="ECO:0000250" key="1"/>
<evidence type="ECO:0000250" key="2">
    <source>
        <dbReference type="UniProtKB" id="P06686"/>
    </source>
</evidence>
<evidence type="ECO:0000250" key="3">
    <source>
        <dbReference type="UniProtKB" id="P09626"/>
    </source>
</evidence>
<evidence type="ECO:0000250" key="4">
    <source>
        <dbReference type="UniProtKB" id="P50993"/>
    </source>
</evidence>
<evidence type="ECO:0000250" key="5">
    <source>
        <dbReference type="UniProtKB" id="Q6PIE5"/>
    </source>
</evidence>
<evidence type="ECO:0000255" key="6"/>
<evidence type="ECO:0000256" key="7">
    <source>
        <dbReference type="SAM" id="MobiDB-lite"/>
    </source>
</evidence>
<evidence type="ECO:0000269" key="8">
    <source>
    </source>
</evidence>
<evidence type="ECO:0000305" key="9"/>
<accession>A2VDL6</accession>
<keyword id="KW-0067">ATP-binding</keyword>
<keyword id="KW-1003">Cell membrane</keyword>
<keyword id="KW-0406">Ion transport</keyword>
<keyword id="KW-0460">Magnesium</keyword>
<keyword id="KW-0472">Membrane</keyword>
<keyword id="KW-0479">Metal-binding</keyword>
<keyword id="KW-0547">Nucleotide-binding</keyword>
<keyword id="KW-0597">Phosphoprotein</keyword>
<keyword id="KW-0630">Potassium</keyword>
<keyword id="KW-0633">Potassium transport</keyword>
<keyword id="KW-1185">Reference proteome</keyword>
<keyword id="KW-0915">Sodium</keyword>
<keyword id="KW-0739">Sodium transport</keyword>
<keyword id="KW-0740">Sodium/potassium transport</keyword>
<keyword id="KW-1278">Translocase</keyword>
<keyword id="KW-0812">Transmembrane</keyword>
<keyword id="KW-1133">Transmembrane helix</keyword>
<keyword id="KW-0813">Transport</keyword>
<name>AT1A2_BOVIN</name>
<feature type="propeptide" id="PRO_0000305981" evidence="1">
    <location>
        <begin position="1"/>
        <end position="5"/>
    </location>
</feature>
<feature type="chain" id="PRO_0000305982" description="Sodium/potassium-transporting ATPase subunit alpha-2">
    <location>
        <begin position="6"/>
        <end position="1020"/>
    </location>
</feature>
<feature type="topological domain" description="Cytoplasmic" evidence="6">
    <location>
        <begin position="6"/>
        <end position="85"/>
    </location>
</feature>
<feature type="transmembrane region" description="Helical" evidence="6">
    <location>
        <begin position="86"/>
        <end position="106"/>
    </location>
</feature>
<feature type="topological domain" description="Extracellular" evidence="6">
    <location>
        <begin position="107"/>
        <end position="129"/>
    </location>
</feature>
<feature type="transmembrane region" description="Helical" evidence="6">
    <location>
        <begin position="130"/>
        <end position="150"/>
    </location>
</feature>
<feature type="topological domain" description="Cytoplasmic" evidence="6">
    <location>
        <begin position="151"/>
        <end position="286"/>
    </location>
</feature>
<feature type="transmembrane region" description="Helical" evidence="6">
    <location>
        <begin position="287"/>
        <end position="306"/>
    </location>
</feature>
<feature type="topological domain" description="Extracellular" evidence="6">
    <location>
        <begin position="307"/>
        <end position="318"/>
    </location>
</feature>
<feature type="transmembrane region" description="Helical" evidence="6">
    <location>
        <begin position="319"/>
        <end position="336"/>
    </location>
</feature>
<feature type="topological domain" description="Cytoplasmic" evidence="6">
    <location>
        <begin position="337"/>
        <end position="769"/>
    </location>
</feature>
<feature type="transmembrane region" description="Helical" evidence="6">
    <location>
        <begin position="770"/>
        <end position="789"/>
    </location>
</feature>
<feature type="topological domain" description="Extracellular" evidence="6">
    <location>
        <begin position="790"/>
        <end position="799"/>
    </location>
</feature>
<feature type="transmembrane region" description="Helical" evidence="6">
    <location>
        <begin position="800"/>
        <end position="820"/>
    </location>
</feature>
<feature type="topological domain" description="Cytoplasmic" evidence="6">
    <location>
        <begin position="821"/>
        <end position="840"/>
    </location>
</feature>
<feature type="transmembrane region" description="Helical" evidence="6">
    <location>
        <begin position="841"/>
        <end position="863"/>
    </location>
</feature>
<feature type="topological domain" description="Extracellular" evidence="6">
    <location>
        <begin position="864"/>
        <end position="915"/>
    </location>
</feature>
<feature type="transmembrane region" description="Helical" evidence="6">
    <location>
        <begin position="916"/>
        <end position="935"/>
    </location>
</feature>
<feature type="topological domain" description="Cytoplasmic" evidence="6">
    <location>
        <begin position="936"/>
        <end position="948"/>
    </location>
</feature>
<feature type="transmembrane region" description="Helical" evidence="6">
    <location>
        <begin position="949"/>
        <end position="967"/>
    </location>
</feature>
<feature type="topological domain" description="Extracellular" evidence="6">
    <location>
        <begin position="968"/>
        <end position="982"/>
    </location>
</feature>
<feature type="transmembrane region" description="Helical" evidence="6">
    <location>
        <begin position="983"/>
        <end position="1003"/>
    </location>
</feature>
<feature type="topological domain" description="Cytoplasmic" evidence="6">
    <location>
        <begin position="1004"/>
        <end position="1020"/>
    </location>
</feature>
<feature type="region of interest" description="Disordered" evidence="7">
    <location>
        <begin position="1"/>
        <end position="31"/>
    </location>
</feature>
<feature type="region of interest" description="Interaction with phosphoinositide-3 kinase" evidence="1">
    <location>
        <begin position="80"/>
        <end position="82"/>
    </location>
</feature>
<feature type="region of interest" description="Disordered" evidence="7">
    <location>
        <begin position="212"/>
        <end position="231"/>
    </location>
</feature>
<feature type="compositionally biased region" description="Polar residues" evidence="7">
    <location>
        <begin position="212"/>
        <end position="227"/>
    </location>
</feature>
<feature type="active site" description="4-aspartylphosphate intermediate" evidence="1">
    <location>
        <position position="374"/>
    </location>
</feature>
<feature type="binding site" evidence="1">
    <location>
        <position position="714"/>
    </location>
    <ligand>
        <name>Mg(2+)</name>
        <dbReference type="ChEBI" id="CHEBI:18420"/>
    </ligand>
</feature>
<feature type="binding site" evidence="1">
    <location>
        <position position="718"/>
    </location>
    <ligand>
        <name>Mg(2+)</name>
        <dbReference type="ChEBI" id="CHEBI:18420"/>
    </ligand>
</feature>
<feature type="modified residue" description="Phosphoserine" evidence="5">
    <location>
        <position position="10"/>
    </location>
</feature>
<feature type="modified residue" description="Phosphoserine" evidence="2">
    <location>
        <position position="439"/>
    </location>
</feature>
<feature type="modified residue" description="Phosphoserine" evidence="5">
    <location>
        <position position="450"/>
    </location>
</feature>
<feature type="modified residue" description="Phosphoserine" evidence="2">
    <location>
        <position position="496"/>
    </location>
</feature>
<feature type="modified residue" description="Phosphoserine" evidence="5">
    <location>
        <position position="559"/>
    </location>
</feature>
<feature type="modified residue" description="Phosphothreonine" evidence="4">
    <location>
        <position position="570"/>
    </location>
</feature>
<feature type="modified residue" description="Phosphoserine" evidence="4">
    <location>
        <position position="587"/>
    </location>
</feature>
<feature type="modified residue" description="Phosphoserine" evidence="5">
    <location>
        <position position="672"/>
    </location>
</feature>
<feature type="modified residue" description="Phosphoserine" evidence="3">
    <location>
        <position position="826"/>
    </location>
</feature>
<feature type="modified residue" description="Phosphoserine; by PKA" evidence="1">
    <location>
        <position position="940"/>
    </location>
</feature>
<organism>
    <name type="scientific">Bos taurus</name>
    <name type="common">Bovine</name>
    <dbReference type="NCBI Taxonomy" id="9913"/>
    <lineage>
        <taxon>Eukaryota</taxon>
        <taxon>Metazoa</taxon>
        <taxon>Chordata</taxon>
        <taxon>Craniata</taxon>
        <taxon>Vertebrata</taxon>
        <taxon>Euteleostomi</taxon>
        <taxon>Mammalia</taxon>
        <taxon>Eutheria</taxon>
        <taxon>Laurasiatheria</taxon>
        <taxon>Artiodactyla</taxon>
        <taxon>Ruminantia</taxon>
        <taxon>Pecora</taxon>
        <taxon>Bovidae</taxon>
        <taxon>Bovinae</taxon>
        <taxon>Bos</taxon>
    </lineage>
</organism>